<reference key="1">
    <citation type="journal article" date="1996" name="Planta">
        <title>Germination-specific lipid transfer protein cDNAs in Brassica napus L.</title>
        <authorList>
            <person name="Soufleri I.A."/>
            <person name="Vergnolle C."/>
            <person name="Miginiac E."/>
            <person name="Kader J.-C."/>
        </authorList>
    </citation>
    <scope>NUCLEOTIDE SEQUENCE [MRNA]</scope>
    <source>
        <strain>cv. Darmor</strain>
    </source>
</reference>
<dbReference type="EMBL" id="U22174">
    <property type="protein sequence ID" value="AAA64310.1"/>
    <property type="molecule type" value="mRNA"/>
</dbReference>
<dbReference type="PIR" id="T07864">
    <property type="entry name" value="T07864"/>
</dbReference>
<dbReference type="SMR" id="Q42615"/>
<dbReference type="GO" id="GO:0008289">
    <property type="term" value="F:lipid binding"/>
    <property type="evidence" value="ECO:0007669"/>
    <property type="project" value="UniProtKB-KW"/>
</dbReference>
<dbReference type="GO" id="GO:0006869">
    <property type="term" value="P:lipid transport"/>
    <property type="evidence" value="ECO:0007669"/>
    <property type="project" value="InterPro"/>
</dbReference>
<dbReference type="CDD" id="cd01960">
    <property type="entry name" value="nsLTP1"/>
    <property type="match status" value="1"/>
</dbReference>
<dbReference type="FunFam" id="1.10.110.10:FF:000002">
    <property type="entry name" value="Non-specific lipid-transfer protein"/>
    <property type="match status" value="1"/>
</dbReference>
<dbReference type="Gene3D" id="1.10.110.10">
    <property type="entry name" value="Plant lipid-transfer and hydrophobic proteins"/>
    <property type="match status" value="1"/>
</dbReference>
<dbReference type="InterPro" id="IPR036312">
    <property type="entry name" value="Bifun_inhib/LTP/seed_sf"/>
</dbReference>
<dbReference type="InterPro" id="IPR016140">
    <property type="entry name" value="Bifunc_inhib/LTP/seed_store"/>
</dbReference>
<dbReference type="InterPro" id="IPR000528">
    <property type="entry name" value="Plant_nsLTP"/>
</dbReference>
<dbReference type="PANTHER" id="PTHR33076">
    <property type="entry name" value="NON-SPECIFIC LIPID-TRANSFER PROTEIN 2-RELATED"/>
    <property type="match status" value="1"/>
</dbReference>
<dbReference type="Pfam" id="PF00234">
    <property type="entry name" value="Tryp_alpha_amyl"/>
    <property type="match status" value="1"/>
</dbReference>
<dbReference type="PRINTS" id="PR00382">
    <property type="entry name" value="LIPIDTRNSFER"/>
</dbReference>
<dbReference type="SMART" id="SM00499">
    <property type="entry name" value="AAI"/>
    <property type="match status" value="1"/>
</dbReference>
<dbReference type="SUPFAM" id="SSF47699">
    <property type="entry name" value="Bifunctional inhibitor/lipid-transfer protein/seed storage 2S albumin"/>
    <property type="match status" value="1"/>
</dbReference>
<dbReference type="PROSITE" id="PS00597">
    <property type="entry name" value="PLANT_LTP"/>
    <property type="match status" value="1"/>
</dbReference>
<protein>
    <recommendedName>
        <fullName>Non-specific lipid-transfer protein 2</fullName>
        <shortName>LTP 2</shortName>
    </recommendedName>
</protein>
<evidence type="ECO:0000255" key="1"/>
<evidence type="ECO:0000305" key="2"/>
<sequence length="117" mass="11966">MAGLMKLACLVLACMIVAGPITSNAALSCGTVSGYVAPCIGYLTQNGPLPRGCCTGVTNLNNMARTTPDRQQACRCLVGAANSFPTLNAARAAGLPKACGVNIPYKISKSTNCNSVR</sequence>
<name>NLTP2_BRANA</name>
<proteinExistence type="inferred from homology"/>
<keyword id="KW-1015">Disulfide bond</keyword>
<keyword id="KW-0446">Lipid-binding</keyword>
<keyword id="KW-0732">Signal</keyword>
<keyword id="KW-0813">Transport</keyword>
<gene>
    <name type="primary">LTP2</name>
</gene>
<comment type="function">
    <text>Plant non-specific lipid-transfer proteins transfer phospholipids as well as galactolipids across membranes. May play a role in wax or cutin deposition in the cell walls of expanding epidermal cells and certain secretory tissues.</text>
</comment>
<comment type="similarity">
    <text evidence="2">Belongs to the plant LTP family.</text>
</comment>
<feature type="signal peptide" evidence="1">
    <location>
        <begin position="1"/>
        <end position="25"/>
    </location>
</feature>
<feature type="chain" id="PRO_0000018369" description="Non-specific lipid-transfer protein 2">
    <location>
        <begin position="26"/>
        <end position="117"/>
    </location>
</feature>
<feature type="disulfide bond" evidence="1">
    <location>
        <begin position="29"/>
        <end position="76"/>
    </location>
</feature>
<feature type="disulfide bond" evidence="1">
    <location>
        <begin position="39"/>
        <end position="53"/>
    </location>
</feature>
<feature type="disulfide bond" evidence="1">
    <location>
        <begin position="54"/>
        <end position="99"/>
    </location>
</feature>
<feature type="disulfide bond" evidence="1">
    <location>
        <begin position="74"/>
        <end position="113"/>
    </location>
</feature>
<accession>Q42615</accession>
<organism>
    <name type="scientific">Brassica napus</name>
    <name type="common">Rape</name>
    <dbReference type="NCBI Taxonomy" id="3708"/>
    <lineage>
        <taxon>Eukaryota</taxon>
        <taxon>Viridiplantae</taxon>
        <taxon>Streptophyta</taxon>
        <taxon>Embryophyta</taxon>
        <taxon>Tracheophyta</taxon>
        <taxon>Spermatophyta</taxon>
        <taxon>Magnoliopsida</taxon>
        <taxon>eudicotyledons</taxon>
        <taxon>Gunneridae</taxon>
        <taxon>Pentapetalae</taxon>
        <taxon>rosids</taxon>
        <taxon>malvids</taxon>
        <taxon>Brassicales</taxon>
        <taxon>Brassicaceae</taxon>
        <taxon>Brassiceae</taxon>
        <taxon>Brassica</taxon>
    </lineage>
</organism>